<keyword id="KW-0238">DNA-binding</keyword>
<keyword id="KW-1017">Isopeptide bond</keyword>
<keyword id="KW-0479">Metal-binding</keyword>
<keyword id="KW-0539">Nucleus</keyword>
<keyword id="KW-1267">Proteomics identification</keyword>
<keyword id="KW-1185">Reference proteome</keyword>
<keyword id="KW-0677">Repeat</keyword>
<keyword id="KW-0804">Transcription</keyword>
<keyword id="KW-0805">Transcription regulation</keyword>
<keyword id="KW-0832">Ubl conjugation</keyword>
<keyword id="KW-0862">Zinc</keyword>
<keyword id="KW-0863">Zinc-finger</keyword>
<sequence>MEQEKKLLVSDSNSFMERESLKSPFTGDTSMNNLETVHHNNSKADKLKEKPSEWSKRHRPQHYKHEDAKEMPLTWVQDEIWCHDSYESDGKSENWGNFIAKEEEKPNHQEWDSGEHTNACVQQNSSFVDRPYKCSECWKSFSNSSHLRTHQRTHSGEKPYKCSECAKCFCNSSHLIQHLRMHTGEKPYQCGECGKSFSNTSHLIIHERTHTGEKPYKCPECGKRFSSSSHLIQHHRSHTGEKPYECSVCGKGFSHSYVLIEHQRTHTGEKPYKCPDCGKSFSQSSSLIRHQRTHTGEKPYKCLECEKSFGCNSTLIKHQRIHTGEKPYQCPECGKNFSRSSNLITHQKMHTGEKSYESSEYEESLGQNCNVIEECRIQLGEKPYRCCECGKSFGLSSHLIRHQRTHTGEKPYRCSECWKTFSQSSTLVIHQRTHTGEKPYKCPDCGESFSQSFNLIRHRRTHIGEKPYKCTSCEKCFSRSAYLSQHRKIHVEKPFESPDVGDFPHEWTWKNCSGEMPFISSFSVSNSSS</sequence>
<evidence type="ECO:0000250" key="1"/>
<evidence type="ECO:0000255" key="2">
    <source>
        <dbReference type="PROSITE-ProRule" id="PRU00042"/>
    </source>
</evidence>
<evidence type="ECO:0000256" key="3">
    <source>
        <dbReference type="SAM" id="MobiDB-lite"/>
    </source>
</evidence>
<evidence type="ECO:0000269" key="4">
    <source>
    </source>
</evidence>
<evidence type="ECO:0000269" key="5">
    <source>
    </source>
</evidence>
<evidence type="ECO:0000305" key="6"/>
<evidence type="ECO:0007744" key="7">
    <source>
    </source>
</evidence>
<dbReference type="EMBL" id="AK095321">
    <property type="protein sequence ID" value="BAC04529.1"/>
    <property type="molecule type" value="mRNA"/>
</dbReference>
<dbReference type="EMBL" id="BX537876">
    <property type="protein sequence ID" value="CAD97876.1"/>
    <property type="molecule type" value="mRNA"/>
</dbReference>
<dbReference type="EMBL" id="BC130515">
    <property type="protein sequence ID" value="AAI30516.1"/>
    <property type="molecule type" value="mRNA"/>
</dbReference>
<dbReference type="EMBL" id="BC130517">
    <property type="protein sequence ID" value="AAI30518.1"/>
    <property type="molecule type" value="mRNA"/>
</dbReference>
<dbReference type="CCDS" id="CCDS6354.1"/>
<dbReference type="RefSeq" id="NP_689625.2">
    <property type="nucleotide sequence ID" value="NM_152412.3"/>
</dbReference>
<dbReference type="SMR" id="Q7Z3I7"/>
<dbReference type="BioGRID" id="126473">
    <property type="interactions" value="62"/>
</dbReference>
<dbReference type="FunCoup" id="Q7Z3I7">
    <property type="interactions" value="303"/>
</dbReference>
<dbReference type="IntAct" id="Q7Z3I7">
    <property type="interactions" value="70"/>
</dbReference>
<dbReference type="STRING" id="9606.ENSP00000319305"/>
<dbReference type="GlyGen" id="Q7Z3I7">
    <property type="glycosylation" value="1 site, 1 O-linked glycan (1 site)"/>
</dbReference>
<dbReference type="iPTMnet" id="Q7Z3I7"/>
<dbReference type="PhosphoSitePlus" id="Q7Z3I7"/>
<dbReference type="BioMuta" id="ZNF572"/>
<dbReference type="DMDM" id="74762429"/>
<dbReference type="jPOST" id="Q7Z3I7"/>
<dbReference type="MassIVE" id="Q7Z3I7"/>
<dbReference type="PaxDb" id="9606-ENSP00000319305"/>
<dbReference type="PeptideAtlas" id="Q7Z3I7"/>
<dbReference type="ProteomicsDB" id="69054"/>
<dbReference type="Antibodypedia" id="27116">
    <property type="antibodies" value="118 antibodies from 15 providers"/>
</dbReference>
<dbReference type="DNASU" id="137209"/>
<dbReference type="Ensembl" id="ENST00000319286.6">
    <property type="protein sequence ID" value="ENSP00000319305.5"/>
    <property type="gene ID" value="ENSG00000180938.6"/>
</dbReference>
<dbReference type="GeneID" id="137209"/>
<dbReference type="KEGG" id="hsa:137209"/>
<dbReference type="MANE-Select" id="ENST00000319286.6">
    <property type="protein sequence ID" value="ENSP00000319305.5"/>
    <property type="RefSeq nucleotide sequence ID" value="NM_152412.3"/>
    <property type="RefSeq protein sequence ID" value="NP_689625.2"/>
</dbReference>
<dbReference type="UCSC" id="uc003yrr.4">
    <property type="organism name" value="human"/>
</dbReference>
<dbReference type="AGR" id="HGNC:26758"/>
<dbReference type="CTD" id="137209"/>
<dbReference type="GeneCards" id="ZNF572"/>
<dbReference type="HGNC" id="HGNC:26758">
    <property type="gene designation" value="ZNF572"/>
</dbReference>
<dbReference type="HPA" id="ENSG00000180938">
    <property type="expression patterns" value="Low tissue specificity"/>
</dbReference>
<dbReference type="neXtProt" id="NX_Q7Z3I7"/>
<dbReference type="OpenTargets" id="ENSG00000180938"/>
<dbReference type="PharmGKB" id="PA134924678"/>
<dbReference type="VEuPathDB" id="HostDB:ENSG00000180938"/>
<dbReference type="eggNOG" id="KOG1721">
    <property type="taxonomic scope" value="Eukaryota"/>
</dbReference>
<dbReference type="GeneTree" id="ENSGT00940000162935"/>
<dbReference type="HOGENOM" id="CLU_002678_10_0_1"/>
<dbReference type="InParanoid" id="Q7Z3I7"/>
<dbReference type="OMA" id="EWTWKNC"/>
<dbReference type="OrthoDB" id="6591996at2759"/>
<dbReference type="PAN-GO" id="Q7Z3I7">
    <property type="GO annotations" value="4 GO annotations based on evolutionary models"/>
</dbReference>
<dbReference type="PhylomeDB" id="Q7Z3I7"/>
<dbReference type="TreeFam" id="TF341767"/>
<dbReference type="PathwayCommons" id="Q7Z3I7"/>
<dbReference type="SignaLink" id="Q7Z3I7"/>
<dbReference type="BioGRID-ORCS" id="137209">
    <property type="hits" value="19 hits in 1182 CRISPR screens"/>
</dbReference>
<dbReference type="ChiTaRS" id="ZNF572">
    <property type="organism name" value="human"/>
</dbReference>
<dbReference type="GenomeRNAi" id="137209"/>
<dbReference type="Pharos" id="Q7Z3I7">
    <property type="development level" value="Tdark"/>
</dbReference>
<dbReference type="PRO" id="PR:Q7Z3I7"/>
<dbReference type="Proteomes" id="UP000005640">
    <property type="component" value="Chromosome 8"/>
</dbReference>
<dbReference type="RNAct" id="Q7Z3I7">
    <property type="molecule type" value="protein"/>
</dbReference>
<dbReference type="Bgee" id="ENSG00000180938">
    <property type="expression patterns" value="Expressed in primordial germ cell in gonad and 101 other cell types or tissues"/>
</dbReference>
<dbReference type="GO" id="GO:0005654">
    <property type="term" value="C:nucleoplasm"/>
    <property type="evidence" value="ECO:0000318"/>
    <property type="project" value="GO_Central"/>
</dbReference>
<dbReference type="GO" id="GO:0005634">
    <property type="term" value="C:nucleus"/>
    <property type="evidence" value="ECO:0000314"/>
    <property type="project" value="LIFEdb"/>
</dbReference>
<dbReference type="GO" id="GO:0001227">
    <property type="term" value="F:DNA-binding transcription repressor activity, RNA polymerase II-specific"/>
    <property type="evidence" value="ECO:0000318"/>
    <property type="project" value="GO_Central"/>
</dbReference>
<dbReference type="GO" id="GO:0042802">
    <property type="term" value="F:identical protein binding"/>
    <property type="evidence" value="ECO:0000353"/>
    <property type="project" value="IntAct"/>
</dbReference>
<dbReference type="GO" id="GO:0000978">
    <property type="term" value="F:RNA polymerase II cis-regulatory region sequence-specific DNA binding"/>
    <property type="evidence" value="ECO:0000318"/>
    <property type="project" value="GO_Central"/>
</dbReference>
<dbReference type="GO" id="GO:0008270">
    <property type="term" value="F:zinc ion binding"/>
    <property type="evidence" value="ECO:0007669"/>
    <property type="project" value="UniProtKB-KW"/>
</dbReference>
<dbReference type="GO" id="GO:0000122">
    <property type="term" value="P:negative regulation of transcription by RNA polymerase II"/>
    <property type="evidence" value="ECO:0000318"/>
    <property type="project" value="GO_Central"/>
</dbReference>
<dbReference type="GO" id="GO:0001817">
    <property type="term" value="P:regulation of cytokine production"/>
    <property type="evidence" value="ECO:0000318"/>
    <property type="project" value="GO_Central"/>
</dbReference>
<dbReference type="GO" id="GO:0002682">
    <property type="term" value="P:regulation of immune system process"/>
    <property type="evidence" value="ECO:0000318"/>
    <property type="project" value="GO_Central"/>
</dbReference>
<dbReference type="FunFam" id="3.30.160.60:FF:002063">
    <property type="entry name" value="RB associated KRAB zinc finger"/>
    <property type="match status" value="1"/>
</dbReference>
<dbReference type="FunFam" id="3.30.160.60:FF:000478">
    <property type="entry name" value="Zinc finger protein 133"/>
    <property type="match status" value="1"/>
</dbReference>
<dbReference type="FunFam" id="3.30.160.60:FF:000725">
    <property type="entry name" value="zinc finger protein 205 isoform X1"/>
    <property type="match status" value="1"/>
</dbReference>
<dbReference type="FunFam" id="3.30.160.60:FF:000269">
    <property type="entry name" value="Zinc finger protein 287"/>
    <property type="match status" value="1"/>
</dbReference>
<dbReference type="FunFam" id="3.30.160.60:FF:002343">
    <property type="entry name" value="Zinc finger protein 33A"/>
    <property type="match status" value="1"/>
</dbReference>
<dbReference type="FunFam" id="3.30.160.60:FF:000069">
    <property type="entry name" value="Zinc finger protein 572"/>
    <property type="match status" value="1"/>
</dbReference>
<dbReference type="FunFam" id="3.30.160.60:FF:000367">
    <property type="entry name" value="Zinc finger protein 572"/>
    <property type="match status" value="1"/>
</dbReference>
<dbReference type="FunFam" id="3.30.160.60:FF:001814">
    <property type="entry name" value="Zinc finger protein 572"/>
    <property type="match status" value="1"/>
</dbReference>
<dbReference type="FunFam" id="3.30.160.60:FF:002481">
    <property type="entry name" value="Zinc finger protein 572"/>
    <property type="match status" value="1"/>
</dbReference>
<dbReference type="FunFam" id="3.30.160.60:FF:000360">
    <property type="entry name" value="zinc finger protein 572"/>
    <property type="match status" value="2"/>
</dbReference>
<dbReference type="FunFam" id="3.30.160.60:FF:000990">
    <property type="entry name" value="zinc finger protein 629 isoform X2"/>
    <property type="match status" value="1"/>
</dbReference>
<dbReference type="Gene3D" id="3.30.160.60">
    <property type="entry name" value="Classic Zinc Finger"/>
    <property type="match status" value="12"/>
</dbReference>
<dbReference type="InterPro" id="IPR036236">
    <property type="entry name" value="Znf_C2H2_sf"/>
</dbReference>
<dbReference type="InterPro" id="IPR013087">
    <property type="entry name" value="Znf_C2H2_type"/>
</dbReference>
<dbReference type="PANTHER" id="PTHR23235:SF178">
    <property type="entry name" value="C2H2-TYPE DOMAIN-CONTAINING PROTEIN-RELATED"/>
    <property type="match status" value="1"/>
</dbReference>
<dbReference type="PANTHER" id="PTHR23235">
    <property type="entry name" value="KRUEPPEL-LIKE TRANSCRIPTION FACTOR"/>
    <property type="match status" value="1"/>
</dbReference>
<dbReference type="Pfam" id="PF00096">
    <property type="entry name" value="zf-C2H2"/>
    <property type="match status" value="12"/>
</dbReference>
<dbReference type="SMART" id="SM00355">
    <property type="entry name" value="ZnF_C2H2"/>
    <property type="match status" value="12"/>
</dbReference>
<dbReference type="SUPFAM" id="SSF57667">
    <property type="entry name" value="beta-beta-alpha zinc fingers"/>
    <property type="match status" value="7"/>
</dbReference>
<dbReference type="PROSITE" id="PS00028">
    <property type="entry name" value="ZINC_FINGER_C2H2_1"/>
    <property type="match status" value="12"/>
</dbReference>
<dbReference type="PROSITE" id="PS50157">
    <property type="entry name" value="ZINC_FINGER_C2H2_2"/>
    <property type="match status" value="12"/>
</dbReference>
<protein>
    <recommendedName>
        <fullName>Zinc finger protein 572</fullName>
    </recommendedName>
</protein>
<gene>
    <name type="primary">ZNF572</name>
</gene>
<organism>
    <name type="scientific">Homo sapiens</name>
    <name type="common">Human</name>
    <dbReference type="NCBI Taxonomy" id="9606"/>
    <lineage>
        <taxon>Eukaryota</taxon>
        <taxon>Metazoa</taxon>
        <taxon>Chordata</taxon>
        <taxon>Craniata</taxon>
        <taxon>Vertebrata</taxon>
        <taxon>Euteleostomi</taxon>
        <taxon>Mammalia</taxon>
        <taxon>Eutheria</taxon>
        <taxon>Euarchontoglires</taxon>
        <taxon>Primates</taxon>
        <taxon>Haplorrhini</taxon>
        <taxon>Catarrhini</taxon>
        <taxon>Hominidae</taxon>
        <taxon>Homo</taxon>
    </lineage>
</organism>
<feature type="chain" id="PRO_0000251223" description="Zinc finger protein 572">
    <location>
        <begin position="1"/>
        <end position="529"/>
    </location>
</feature>
<feature type="zinc finger region" description="C2H2-type 1" evidence="2">
    <location>
        <begin position="132"/>
        <end position="154"/>
    </location>
</feature>
<feature type="zinc finger region" description="C2H2-type 2" evidence="2">
    <location>
        <begin position="160"/>
        <end position="182"/>
    </location>
</feature>
<feature type="zinc finger region" description="C2H2-type 3" evidence="2">
    <location>
        <begin position="188"/>
        <end position="210"/>
    </location>
</feature>
<feature type="zinc finger region" description="C2H2-type 4" evidence="2">
    <location>
        <begin position="216"/>
        <end position="238"/>
    </location>
</feature>
<feature type="zinc finger region" description="C2H2-type 5" evidence="2">
    <location>
        <begin position="244"/>
        <end position="266"/>
    </location>
</feature>
<feature type="zinc finger region" description="C2H2-type 6" evidence="2">
    <location>
        <begin position="272"/>
        <end position="294"/>
    </location>
</feature>
<feature type="zinc finger region" description="C2H2-type 7" evidence="2">
    <location>
        <begin position="300"/>
        <end position="322"/>
    </location>
</feature>
<feature type="zinc finger region" description="C2H2-type 8" evidence="2">
    <location>
        <begin position="328"/>
        <end position="350"/>
    </location>
</feature>
<feature type="zinc finger region" description="C2H2-type 9" evidence="2">
    <location>
        <begin position="384"/>
        <end position="406"/>
    </location>
</feature>
<feature type="zinc finger region" description="C2H2-type 10" evidence="2">
    <location>
        <begin position="412"/>
        <end position="434"/>
    </location>
</feature>
<feature type="zinc finger region" description="C2H2-type 11" evidence="2">
    <location>
        <begin position="440"/>
        <end position="462"/>
    </location>
</feature>
<feature type="zinc finger region" description="C2H2-type 12" evidence="2">
    <location>
        <begin position="468"/>
        <end position="490"/>
    </location>
</feature>
<feature type="region of interest" description="Disordered" evidence="3">
    <location>
        <begin position="1"/>
        <end position="62"/>
    </location>
</feature>
<feature type="compositionally biased region" description="Polar residues" evidence="3">
    <location>
        <begin position="26"/>
        <end position="35"/>
    </location>
</feature>
<feature type="compositionally biased region" description="Basic and acidic residues" evidence="3">
    <location>
        <begin position="36"/>
        <end position="55"/>
    </location>
</feature>
<feature type="cross-link" description="Glycyl lysine isopeptide (Lys-Gly) (interchain with G-Cter in SUMO2)" evidence="7">
    <location>
        <position position="5"/>
    </location>
</feature>
<feature type="cross-link" description="Glycyl lysine isopeptide (Lys-Gly) (interchain with G-Cter in SUMO2)" evidence="7">
    <location>
        <position position="6"/>
    </location>
</feature>
<feature type="sequence variant" id="VAR_027664" description="In dbSNP:rs10104558.">
    <original>K</original>
    <variation>T</variation>
    <location>
        <position position="317"/>
    </location>
</feature>
<feature type="sequence variant" id="VAR_027665" description="In dbSNP:rs10105106." evidence="4">
    <original>G</original>
    <variation>E</variation>
    <location>
        <position position="380"/>
    </location>
</feature>
<feature type="sequence variant" id="VAR_027666" description="In dbSNP:rs10107774." evidence="4">
    <original>S</original>
    <variation>C</variation>
    <location>
        <position position="448"/>
    </location>
</feature>
<feature type="sequence variant" id="VAR_027667" description="In dbSNP:rs7825375.">
    <original>V</original>
    <variation>I</variation>
    <location>
        <position position="500"/>
    </location>
</feature>
<feature type="sequence variant" id="VAR_035591" description="In a colorectal cancer sample; somatic mutation." evidence="5">
    <original>C</original>
    <variation>F</variation>
    <location>
        <position position="512"/>
    </location>
</feature>
<feature type="sequence conflict" description="In Ref. 1; BAC04529." evidence="6" ref="1">
    <original>S</original>
    <variation>I</variation>
    <location>
        <position position="480"/>
    </location>
</feature>
<name>ZN572_HUMAN</name>
<proteinExistence type="evidence at protein level"/>
<reference key="1">
    <citation type="journal article" date="2004" name="Nat. Genet.">
        <title>Complete sequencing and characterization of 21,243 full-length human cDNAs.</title>
        <authorList>
            <person name="Ota T."/>
            <person name="Suzuki Y."/>
            <person name="Nishikawa T."/>
            <person name="Otsuki T."/>
            <person name="Sugiyama T."/>
            <person name="Irie R."/>
            <person name="Wakamatsu A."/>
            <person name="Hayashi K."/>
            <person name="Sato H."/>
            <person name="Nagai K."/>
            <person name="Kimura K."/>
            <person name="Makita H."/>
            <person name="Sekine M."/>
            <person name="Obayashi M."/>
            <person name="Nishi T."/>
            <person name="Shibahara T."/>
            <person name="Tanaka T."/>
            <person name="Ishii S."/>
            <person name="Yamamoto J."/>
            <person name="Saito K."/>
            <person name="Kawai Y."/>
            <person name="Isono Y."/>
            <person name="Nakamura Y."/>
            <person name="Nagahari K."/>
            <person name="Murakami K."/>
            <person name="Yasuda T."/>
            <person name="Iwayanagi T."/>
            <person name="Wagatsuma M."/>
            <person name="Shiratori A."/>
            <person name="Sudo H."/>
            <person name="Hosoiri T."/>
            <person name="Kaku Y."/>
            <person name="Kodaira H."/>
            <person name="Kondo H."/>
            <person name="Sugawara M."/>
            <person name="Takahashi M."/>
            <person name="Kanda K."/>
            <person name="Yokoi T."/>
            <person name="Furuya T."/>
            <person name="Kikkawa E."/>
            <person name="Omura Y."/>
            <person name="Abe K."/>
            <person name="Kamihara K."/>
            <person name="Katsuta N."/>
            <person name="Sato K."/>
            <person name="Tanikawa M."/>
            <person name="Yamazaki M."/>
            <person name="Ninomiya K."/>
            <person name="Ishibashi T."/>
            <person name="Yamashita H."/>
            <person name="Murakawa K."/>
            <person name="Fujimori K."/>
            <person name="Tanai H."/>
            <person name="Kimata M."/>
            <person name="Watanabe M."/>
            <person name="Hiraoka S."/>
            <person name="Chiba Y."/>
            <person name="Ishida S."/>
            <person name="Ono Y."/>
            <person name="Takiguchi S."/>
            <person name="Watanabe S."/>
            <person name="Yosida M."/>
            <person name="Hotuta T."/>
            <person name="Kusano J."/>
            <person name="Kanehori K."/>
            <person name="Takahashi-Fujii A."/>
            <person name="Hara H."/>
            <person name="Tanase T.-O."/>
            <person name="Nomura Y."/>
            <person name="Togiya S."/>
            <person name="Komai F."/>
            <person name="Hara R."/>
            <person name="Takeuchi K."/>
            <person name="Arita M."/>
            <person name="Imose N."/>
            <person name="Musashino K."/>
            <person name="Yuuki H."/>
            <person name="Oshima A."/>
            <person name="Sasaki N."/>
            <person name="Aotsuka S."/>
            <person name="Yoshikawa Y."/>
            <person name="Matsunawa H."/>
            <person name="Ichihara T."/>
            <person name="Shiohata N."/>
            <person name="Sano S."/>
            <person name="Moriya S."/>
            <person name="Momiyama H."/>
            <person name="Satoh N."/>
            <person name="Takami S."/>
            <person name="Terashima Y."/>
            <person name="Suzuki O."/>
            <person name="Nakagawa S."/>
            <person name="Senoh A."/>
            <person name="Mizoguchi H."/>
            <person name="Goto Y."/>
            <person name="Shimizu F."/>
            <person name="Wakebe H."/>
            <person name="Hishigaki H."/>
            <person name="Watanabe T."/>
            <person name="Sugiyama A."/>
            <person name="Takemoto M."/>
            <person name="Kawakami B."/>
            <person name="Yamazaki M."/>
            <person name="Watanabe K."/>
            <person name="Kumagai A."/>
            <person name="Itakura S."/>
            <person name="Fukuzumi Y."/>
            <person name="Fujimori Y."/>
            <person name="Komiyama M."/>
            <person name="Tashiro H."/>
            <person name="Tanigami A."/>
            <person name="Fujiwara T."/>
            <person name="Ono T."/>
            <person name="Yamada K."/>
            <person name="Fujii Y."/>
            <person name="Ozaki K."/>
            <person name="Hirao M."/>
            <person name="Ohmori Y."/>
            <person name="Kawabata A."/>
            <person name="Hikiji T."/>
            <person name="Kobatake N."/>
            <person name="Inagaki H."/>
            <person name="Ikema Y."/>
            <person name="Okamoto S."/>
            <person name="Okitani R."/>
            <person name="Kawakami T."/>
            <person name="Noguchi S."/>
            <person name="Itoh T."/>
            <person name="Shigeta K."/>
            <person name="Senba T."/>
            <person name="Matsumura K."/>
            <person name="Nakajima Y."/>
            <person name="Mizuno T."/>
            <person name="Morinaga M."/>
            <person name="Sasaki M."/>
            <person name="Togashi T."/>
            <person name="Oyama M."/>
            <person name="Hata H."/>
            <person name="Watanabe M."/>
            <person name="Komatsu T."/>
            <person name="Mizushima-Sugano J."/>
            <person name="Satoh T."/>
            <person name="Shirai Y."/>
            <person name="Takahashi Y."/>
            <person name="Nakagawa K."/>
            <person name="Okumura K."/>
            <person name="Nagase T."/>
            <person name="Nomura N."/>
            <person name="Kikuchi H."/>
            <person name="Masuho Y."/>
            <person name="Yamashita R."/>
            <person name="Nakai K."/>
            <person name="Yada T."/>
            <person name="Nakamura Y."/>
            <person name="Ohara O."/>
            <person name="Isogai T."/>
            <person name="Sugano S."/>
        </authorList>
    </citation>
    <scope>NUCLEOTIDE SEQUENCE [LARGE SCALE MRNA]</scope>
    <source>
        <tissue>Tongue</tissue>
    </source>
</reference>
<reference key="2">
    <citation type="journal article" date="2007" name="BMC Genomics">
        <title>The full-ORF clone resource of the German cDNA consortium.</title>
        <authorList>
            <person name="Bechtel S."/>
            <person name="Rosenfelder H."/>
            <person name="Duda A."/>
            <person name="Schmidt C.P."/>
            <person name="Ernst U."/>
            <person name="Wellenreuther R."/>
            <person name="Mehrle A."/>
            <person name="Schuster C."/>
            <person name="Bahr A."/>
            <person name="Bloecker H."/>
            <person name="Heubner D."/>
            <person name="Hoerlein A."/>
            <person name="Michel G."/>
            <person name="Wedler H."/>
            <person name="Koehrer K."/>
            <person name="Ottenwaelder B."/>
            <person name="Poustka A."/>
            <person name="Wiemann S."/>
            <person name="Schupp I."/>
        </authorList>
    </citation>
    <scope>NUCLEOTIDE SEQUENCE [LARGE SCALE MRNA]</scope>
    <source>
        <tissue>Fetal kidney</tissue>
    </source>
</reference>
<reference key="3">
    <citation type="journal article" date="2004" name="Genome Res.">
        <title>The status, quality, and expansion of the NIH full-length cDNA project: the Mammalian Gene Collection (MGC).</title>
        <authorList>
            <consortium name="The MGC Project Team"/>
        </authorList>
    </citation>
    <scope>NUCLEOTIDE SEQUENCE [LARGE SCALE MRNA]</scope>
    <scope>VARIANTS GLU-380 AND CYS-448</scope>
</reference>
<reference key="4">
    <citation type="journal article" date="2017" name="Nat. Struct. Mol. Biol.">
        <title>Site-specific mapping of the human SUMO proteome reveals co-modification with phosphorylation.</title>
        <authorList>
            <person name="Hendriks I.A."/>
            <person name="Lyon D."/>
            <person name="Young C."/>
            <person name="Jensen L.J."/>
            <person name="Vertegaal A.C."/>
            <person name="Nielsen M.L."/>
        </authorList>
    </citation>
    <scope>SUMOYLATION [LARGE SCALE ANALYSIS] AT LYS-5 AND LYS-6</scope>
    <scope>IDENTIFICATION BY MASS SPECTROMETRY [LARGE SCALE ANALYSIS]</scope>
</reference>
<reference key="5">
    <citation type="journal article" date="2006" name="Science">
        <title>The consensus coding sequences of human breast and colorectal cancers.</title>
        <authorList>
            <person name="Sjoeblom T."/>
            <person name="Jones S."/>
            <person name="Wood L.D."/>
            <person name="Parsons D.W."/>
            <person name="Lin J."/>
            <person name="Barber T.D."/>
            <person name="Mandelker D."/>
            <person name="Leary R.J."/>
            <person name="Ptak J."/>
            <person name="Silliman N."/>
            <person name="Szabo S."/>
            <person name="Buckhaults P."/>
            <person name="Farrell C."/>
            <person name="Meeh P."/>
            <person name="Markowitz S.D."/>
            <person name="Willis J."/>
            <person name="Dawson D."/>
            <person name="Willson J.K.V."/>
            <person name="Gazdar A.F."/>
            <person name="Hartigan J."/>
            <person name="Wu L."/>
            <person name="Liu C."/>
            <person name="Parmigiani G."/>
            <person name="Park B.H."/>
            <person name="Bachman K.E."/>
            <person name="Papadopoulos N."/>
            <person name="Vogelstein B."/>
            <person name="Kinzler K.W."/>
            <person name="Velculescu V.E."/>
        </authorList>
    </citation>
    <scope>VARIANT [LARGE SCALE ANALYSIS] PHE-512</scope>
</reference>
<accession>Q7Z3I7</accession>
<accession>A1L4E9</accession>
<accession>A1L4F1</accession>
<accession>Q8N1Q0</accession>
<comment type="function">
    <text evidence="1">May be involved in transcriptional regulation.</text>
</comment>
<comment type="interaction">
    <interactant intactId="EBI-10172590">
        <id>Q7Z3I7</id>
    </interactant>
    <interactant intactId="EBI-745689">
        <id>Q7L5A3</id>
        <label>ATOSB</label>
    </interactant>
    <organismsDiffer>false</organismsDiffer>
    <experiments>3</experiments>
</comment>
<comment type="interaction">
    <interactant intactId="EBI-10172590">
        <id>Q7Z3I7</id>
    </interactant>
    <interactant intactId="EBI-742722">
        <id>Q9BUH8</id>
        <label>BEGAIN</label>
    </interactant>
    <organismsDiffer>false</organismsDiffer>
    <experiments>5</experiments>
</comment>
<comment type="interaction">
    <interactant intactId="EBI-10172590">
        <id>Q7Z3I7</id>
    </interactant>
    <interactant intactId="EBI-1049556">
        <id>Q9Y3E2</id>
        <label>BOLA1</label>
    </interactant>
    <organismsDiffer>false</organismsDiffer>
    <experiments>3</experiments>
</comment>
<comment type="interaction">
    <interactant intactId="EBI-10172590">
        <id>Q7Z3I7</id>
    </interactant>
    <interactant intactId="EBI-11532900">
        <id>J3KQ12</id>
        <label>BSCL2</label>
    </interactant>
    <organismsDiffer>false</organismsDiffer>
    <experiments>3</experiments>
</comment>
<comment type="interaction">
    <interactant intactId="EBI-10172590">
        <id>Q7Z3I7</id>
    </interactant>
    <interactant intactId="EBI-10180690">
        <id>Q9ULU8-4</id>
        <label>CADPS</label>
    </interactant>
    <organismsDiffer>false</organismsDiffer>
    <experiments>3</experiments>
</comment>
<comment type="interaction">
    <interactant intactId="EBI-10172590">
        <id>Q7Z3I7</id>
    </interactant>
    <interactant intactId="EBI-751319">
        <id>Q9H257</id>
        <label>CARD9</label>
    </interactant>
    <organismsDiffer>false</organismsDiffer>
    <experiments>7</experiments>
</comment>
<comment type="interaction">
    <interactant intactId="EBI-10172590">
        <id>Q7Z3I7</id>
    </interactant>
    <interactant intactId="EBI-11530605">
        <id>Q9H257-2</id>
        <label>CARD9</label>
    </interactant>
    <organismsDiffer>false</organismsDiffer>
    <experiments>3</experiments>
</comment>
<comment type="interaction">
    <interactant intactId="EBI-10172590">
        <id>Q7Z3I7</id>
    </interactant>
    <interactant intactId="EBI-11524851">
        <id>Q8NA61-2</id>
        <label>CBY2</label>
    </interactant>
    <organismsDiffer>false</organismsDiffer>
    <experiments>3</experiments>
</comment>
<comment type="interaction">
    <interactant intactId="EBI-10172590">
        <id>Q7Z3I7</id>
    </interactant>
    <interactant intactId="EBI-10171570">
        <id>Q68D86</id>
        <label>CCDC102B</label>
    </interactant>
    <organismsDiffer>false</organismsDiffer>
    <experiments>6</experiments>
</comment>
<comment type="interaction">
    <interactant intactId="EBI-10172590">
        <id>Q7Z3I7</id>
    </interactant>
    <interactant intactId="EBI-10171416">
        <id>Q96JN2-2</id>
        <label>CCDC136</label>
    </interactant>
    <organismsDiffer>false</organismsDiffer>
    <experiments>6</experiments>
</comment>
<comment type="interaction">
    <interactant intactId="EBI-10172590">
        <id>Q7Z3I7</id>
    </interactant>
    <interactant intactId="EBI-11063830">
        <id>Q86X02</id>
        <label>CDR2L</label>
    </interactant>
    <organismsDiffer>false</organismsDiffer>
    <experiments>3</experiments>
</comment>
<comment type="interaction">
    <interactant intactId="EBI-10172590">
        <id>Q7Z3I7</id>
    </interactant>
    <interactant intactId="EBI-1104570">
        <id>Q8IYX8</id>
        <label>CEP57L1</label>
    </interactant>
    <organismsDiffer>false</organismsDiffer>
    <experiments>4</experiments>
</comment>
<comment type="interaction">
    <interactant intactId="EBI-10172590">
        <id>Q7Z3I7</id>
    </interactant>
    <interactant intactId="EBI-739624">
        <id>Q8NHQ1</id>
        <label>CEP70</label>
    </interactant>
    <organismsDiffer>false</organismsDiffer>
    <experiments>6</experiments>
</comment>
<comment type="interaction">
    <interactant intactId="EBI-10172590">
        <id>Q7Z3I7</id>
    </interactant>
    <interactant intactId="EBI-12012272">
        <id>Q9UBL6-2</id>
        <label>CPNE7</label>
    </interactant>
    <organismsDiffer>false</organismsDiffer>
    <experiments>3</experiments>
</comment>
<comment type="interaction">
    <interactant intactId="EBI-10172590">
        <id>Q7Z3I7</id>
    </interactant>
    <interactant intactId="EBI-748597">
        <id>Q05D60</id>
        <label>DEUP1</label>
    </interactant>
    <organismsDiffer>false</organismsDiffer>
    <experiments>9</experiments>
</comment>
<comment type="interaction">
    <interactant intactId="EBI-10172590">
        <id>Q7Z3I7</id>
    </interactant>
    <interactant intactId="EBI-5661036">
        <id>A1L4K1</id>
        <label>FSD2</label>
    </interactant>
    <organismsDiffer>false</organismsDiffer>
    <experiments>7</experiments>
</comment>
<comment type="interaction">
    <interactant intactId="EBI-10172590">
        <id>Q7Z3I7</id>
    </interactant>
    <interactant intactId="EBI-1052570">
        <id>O95995</id>
        <label>GAS8</label>
    </interactant>
    <organismsDiffer>false</organismsDiffer>
    <experiments>3</experiments>
</comment>
<comment type="interaction">
    <interactant intactId="EBI-10172590">
        <id>Q7Z3I7</id>
    </interactant>
    <interactant intactId="EBI-744302">
        <id>P14136</id>
        <label>GFAP</label>
    </interactant>
    <organismsDiffer>false</organismsDiffer>
    <experiments>3</experiments>
</comment>
<comment type="interaction">
    <interactant intactId="EBI-10172590">
        <id>Q7Z3I7</id>
    </interactant>
    <interactant intactId="EBI-618309">
        <id>Q08379</id>
        <label>GOLGA2</label>
    </interactant>
    <organismsDiffer>false</organismsDiffer>
    <experiments>6</experiments>
</comment>
<comment type="interaction">
    <interactant intactId="EBI-10172590">
        <id>Q7Z3I7</id>
    </interactant>
    <interactant intactId="EBI-8550965">
        <id>Q13585</id>
        <label>GPR50</label>
    </interactant>
    <organismsDiffer>false</organismsDiffer>
    <experiments>3</experiments>
</comment>
<comment type="interaction">
    <interactant intactId="EBI-10172590">
        <id>Q7Z3I7</id>
    </interactant>
    <interactant intactId="EBI-747754">
        <id>P28799</id>
        <label>GRN</label>
    </interactant>
    <organismsDiffer>false</organismsDiffer>
    <experiments>3</experiments>
</comment>
<comment type="interaction">
    <interactant intactId="EBI-10172590">
        <id>Q7Z3I7</id>
    </interactant>
    <interactant intactId="EBI-712814">
        <id>P54257</id>
        <label>HAP1</label>
    </interactant>
    <organismsDiffer>false</organismsDiffer>
    <experiments>3</experiments>
</comment>
<comment type="interaction">
    <interactant intactId="EBI-10172590">
        <id>Q7Z3I7</id>
    </interactant>
    <interactant intactId="EBI-746704">
        <id>Q9UJC3</id>
        <label>HOOK1</label>
    </interactant>
    <organismsDiffer>false</organismsDiffer>
    <experiments>3</experiments>
</comment>
<comment type="interaction">
    <interactant intactId="EBI-10172590">
        <id>Q7Z3I7</id>
    </interactant>
    <interactant intactId="EBI-10961706">
        <id>Q96ED9-2</id>
        <label>HOOK2</label>
    </interactant>
    <organismsDiffer>false</organismsDiffer>
    <experiments>3</experiments>
</comment>
<comment type="interaction">
    <interactant intactId="EBI-10172590">
        <id>Q7Z3I7</id>
    </interactant>
    <interactant intactId="EBI-466029">
        <id>P42858</id>
        <label>HTT</label>
    </interactant>
    <organismsDiffer>false</organismsDiffer>
    <experiments>9</experiments>
</comment>
<comment type="interaction">
    <interactant intactId="EBI-10172590">
        <id>Q7Z3I7</id>
    </interactant>
    <interactant intactId="EBI-17178971">
        <id>Q14005-2</id>
        <label>IL16</label>
    </interactant>
    <organismsDiffer>false</organismsDiffer>
    <experiments>3</experiments>
</comment>
<comment type="interaction">
    <interactant intactId="EBI-10172590">
        <id>Q7Z3I7</id>
    </interactant>
    <interactant intactId="EBI-715394">
        <id>Q9H079</id>
        <label>KATNBL1</label>
    </interactant>
    <organismsDiffer>false</organismsDiffer>
    <experiments>5</experiments>
</comment>
<comment type="interaction">
    <interactant intactId="EBI-10172590">
        <id>Q7Z3I7</id>
    </interactant>
    <interactant intactId="EBI-10975473">
        <id>O60333-2</id>
        <label>KIF1B</label>
    </interactant>
    <organismsDiffer>false</organismsDiffer>
    <experiments>3</experiments>
</comment>
<comment type="interaction">
    <interactant intactId="EBI-10172590">
        <id>Q7Z3I7</id>
    </interactant>
    <interactant intactId="EBI-8472129">
        <id>Q9HAQ2</id>
        <label>KIF9</label>
    </interactant>
    <organismsDiffer>false</organismsDiffer>
    <experiments>3</experiments>
</comment>
<comment type="interaction">
    <interactant intactId="EBI-10172590">
        <id>Q7Z3I7</id>
    </interactant>
    <interactant intactId="EBI-2125614">
        <id>Q9BVG8</id>
        <label>KIFC3</label>
    </interactant>
    <organismsDiffer>false</organismsDiffer>
    <experiments>6</experiments>
</comment>
<comment type="interaction">
    <interactant intactId="EBI-10172590">
        <id>Q7Z3I7</id>
    </interactant>
    <interactant intactId="EBI-14069005">
        <id>Q9BVG8-5</id>
        <label>KIFC3</label>
    </interactant>
    <organismsDiffer>false</organismsDiffer>
    <experiments>4</experiments>
</comment>
<comment type="interaction">
    <interactant intactId="EBI-10172590">
        <id>Q7Z3I7</id>
    </interactant>
    <interactant intactId="EBI-1643885">
        <id>Q6P597</id>
        <label>KLC3</label>
    </interactant>
    <organismsDiffer>false</organismsDiffer>
    <experiments>3</experiments>
</comment>
<comment type="interaction">
    <interactant intactId="EBI-10172590">
        <id>Q7Z3I7</id>
    </interactant>
    <interactant intactId="EBI-948001">
        <id>Q15323</id>
        <label>KRT31</label>
    </interactant>
    <organismsDiffer>false</organismsDiffer>
    <experiments>3</experiments>
</comment>
<comment type="interaction">
    <interactant intactId="EBI-10172590">
        <id>Q7Z3I7</id>
    </interactant>
    <interactant intactId="EBI-10172150">
        <id>P60370</id>
        <label>KRTAP10-5</label>
    </interactant>
    <organismsDiffer>false</organismsDiffer>
    <experiments>3</experiments>
</comment>
<comment type="interaction">
    <interactant intactId="EBI-10172590">
        <id>Q7Z3I7</id>
    </interactant>
    <interactant intactId="EBI-10172290">
        <id>P60409</id>
        <label>KRTAP10-7</label>
    </interactant>
    <organismsDiffer>false</organismsDiffer>
    <experiments>3</experiments>
</comment>
<comment type="interaction">
    <interactant intactId="EBI-10172590">
        <id>Q7Z3I7</id>
    </interactant>
    <interactant intactId="EBI-10171774">
        <id>P60410</id>
        <label>KRTAP10-8</label>
    </interactant>
    <organismsDiffer>false</organismsDiffer>
    <experiments>9</experiments>
</comment>
<comment type="interaction">
    <interactant intactId="EBI-10172590">
        <id>Q7Z3I7</id>
    </interactant>
    <interactant intactId="EBI-10172052">
        <id>P60411</id>
        <label>KRTAP10-9</label>
    </interactant>
    <organismsDiffer>false</organismsDiffer>
    <experiments>6</experiments>
</comment>
<comment type="interaction">
    <interactant intactId="EBI-10172590">
        <id>Q7Z3I7</id>
    </interactant>
    <interactant intactId="EBI-351935">
        <id>P02545</id>
        <label>LMNA</label>
    </interactant>
    <organismsDiffer>false</organismsDiffer>
    <experiments>3</experiments>
</comment>
<comment type="interaction">
    <interactant intactId="EBI-10172590">
        <id>Q7Z3I7</id>
    </interactant>
    <interactant intactId="EBI-1216080">
        <id>Q9Y250</id>
        <label>LZTS1</label>
    </interactant>
    <organismsDiffer>false</organismsDiffer>
    <experiments>3</experiments>
</comment>
<comment type="interaction">
    <interactant intactId="EBI-10172590">
        <id>Q7Z3I7</id>
    </interactant>
    <interactant intactId="EBI-741037">
        <id>Q9BRK4</id>
        <label>LZTS2</label>
    </interactant>
    <organismsDiffer>false</organismsDiffer>
    <experiments>6</experiments>
</comment>
<comment type="interaction">
    <interactant intactId="EBI-10172590">
        <id>Q7Z3I7</id>
    </interactant>
    <interactant intactId="EBI-724076">
        <id>Q99750</id>
        <label>MDFI</label>
    </interactant>
    <organismsDiffer>false</organismsDiffer>
    <experiments>3</experiments>
</comment>
<comment type="interaction">
    <interactant intactId="EBI-10172590">
        <id>Q7Z3I7</id>
    </interactant>
    <interactant intactId="EBI-748397">
        <id>P50222</id>
        <label>MEOX2</label>
    </interactant>
    <organismsDiffer>false</organismsDiffer>
    <experiments>3</experiments>
</comment>
<comment type="interaction">
    <interactant intactId="EBI-10172590">
        <id>Q7Z3I7</id>
    </interactant>
    <interactant intactId="EBI-716132">
        <id>P42568</id>
        <label>MLLT3</label>
    </interactant>
    <organismsDiffer>false</organismsDiffer>
    <experiments>3</experiments>
</comment>
<comment type="interaction">
    <interactant intactId="EBI-10172590">
        <id>Q7Z3I7</id>
    </interactant>
    <interactant intactId="EBI-742948">
        <id>Q5JR59</id>
        <label>MTUS2</label>
    </interactant>
    <organismsDiffer>false</organismsDiffer>
    <experiments>6</experiments>
</comment>
<comment type="interaction">
    <interactant intactId="EBI-10172590">
        <id>Q7Z3I7</id>
    </interactant>
    <interactant intactId="EBI-11522433">
        <id>Q5JR59-3</id>
        <label>MTUS2</label>
    </interactant>
    <organismsDiffer>false</organismsDiffer>
    <experiments>3</experiments>
</comment>
<comment type="interaction">
    <interactant intactId="EBI-10172590">
        <id>Q7Z3I7</id>
    </interactant>
    <interactant intactId="EBI-928842">
        <id>Q9GZM8</id>
        <label>NDEL1</label>
    </interactant>
    <organismsDiffer>false</organismsDiffer>
    <experiments>3</experiments>
</comment>
<comment type="interaction">
    <interactant intactId="EBI-10172590">
        <id>Q7Z3I7</id>
    </interactant>
    <interactant intactId="EBI-475646">
        <id>P07196</id>
        <label>NEFL</label>
    </interactant>
    <organismsDiffer>false</organismsDiffer>
    <experiments>3</experiments>
</comment>
<comment type="interaction">
    <interactant intactId="EBI-10172590">
        <id>Q7Z3I7</id>
    </interactant>
    <interactant intactId="EBI-1014472">
        <id>P35240</id>
        <label>NF2</label>
    </interactant>
    <organismsDiffer>false</organismsDiffer>
    <experiments>3</experiments>
</comment>
<comment type="interaction">
    <interactant intactId="EBI-10172590">
        <id>Q7Z3I7</id>
    </interactant>
    <interactant intactId="EBI-752074">
        <id>P41219</id>
        <label>PRPH</label>
    </interactant>
    <organismsDiffer>false</organismsDiffer>
    <experiments>3</experiments>
</comment>
<comment type="interaction">
    <interactant intactId="EBI-10172590">
        <id>Q7Z3I7</id>
    </interactant>
    <interactant intactId="EBI-307352">
        <id>Q04864</id>
        <label>REL</label>
    </interactant>
    <organismsDiffer>false</organismsDiffer>
    <experiments>3</experiments>
</comment>
<comment type="interaction">
    <interactant intactId="EBI-10172590">
        <id>Q7Z3I7</id>
    </interactant>
    <interactant intactId="EBI-413317">
        <id>Q96R06</id>
        <label>SPAG5</label>
    </interactant>
    <organismsDiffer>false</organismsDiffer>
    <experiments>3</experiments>
</comment>
<comment type="interaction">
    <interactant intactId="EBI-10172590">
        <id>Q7Z3I7</id>
    </interactant>
    <interactant intactId="EBI-5235340">
        <id>Q7Z699</id>
        <label>SPRED1</label>
    </interactant>
    <organismsDiffer>false</organismsDiffer>
    <experiments>3</experiments>
</comment>
<comment type="interaction">
    <interactant intactId="EBI-10172590">
        <id>Q7Z3I7</id>
    </interactant>
    <interactant intactId="EBI-1105213">
        <id>Q9UBB9</id>
        <label>TFIP11</label>
    </interactant>
    <organismsDiffer>false</organismsDiffer>
    <experiments>3</experiments>
</comment>
<comment type="interaction">
    <interactant intactId="EBI-10172590">
        <id>Q7Z3I7</id>
    </interactant>
    <interactant intactId="EBI-359224">
        <id>Q13077</id>
        <label>TRAF1</label>
    </interactant>
    <organismsDiffer>false</organismsDiffer>
    <experiments>6</experiments>
</comment>
<comment type="interaction">
    <interactant intactId="EBI-10172590">
        <id>Q7Z3I7</id>
    </interactant>
    <interactant intactId="EBI-355744">
        <id>Q12933</id>
        <label>TRAF2</label>
    </interactant>
    <organismsDiffer>false</organismsDiffer>
    <experiments>3</experiments>
</comment>
<comment type="interaction">
    <interactant intactId="EBI-10172590">
        <id>Q7Z3I7</id>
    </interactant>
    <interactant intactId="EBI-719493">
        <id>P14373</id>
        <label>TRIM27</label>
    </interactant>
    <organismsDiffer>false</organismsDiffer>
    <experiments>6</experiments>
</comment>
<comment type="interaction">
    <interactant intactId="EBI-10172590">
        <id>Q7Z3I7</id>
    </interactant>
    <interactant intactId="EBI-2130429">
        <id>Q9BYV2</id>
        <label>TRIM54</label>
    </interactant>
    <organismsDiffer>false</organismsDiffer>
    <experiments>9</experiments>
</comment>
<comment type="interaction">
    <interactant intactId="EBI-10172590">
        <id>Q7Z3I7</id>
    </interactant>
    <interactant intactId="EBI-353844">
        <id>P08670</id>
        <label>VIM</label>
    </interactant>
    <organismsDiffer>false</organismsDiffer>
    <experiments>3</experiments>
</comment>
<comment type="interaction">
    <interactant intactId="EBI-10172590">
        <id>Q7Z3I7</id>
    </interactant>
    <interactant intactId="EBI-720609">
        <id>O76024</id>
        <label>WFS1</label>
    </interactant>
    <organismsDiffer>false</organismsDiffer>
    <experiments>3</experiments>
</comment>
<comment type="interaction">
    <interactant intactId="EBI-10172590">
        <id>Q7Z3I7</id>
    </interactant>
    <interactant intactId="EBI-751647">
        <id>Q15007</id>
        <label>WTAP</label>
    </interactant>
    <organismsDiffer>false</organismsDiffer>
    <experiments>3</experiments>
</comment>
<comment type="interaction">
    <interactant intactId="EBI-10172590">
        <id>Q7Z3I7</id>
    </interactant>
    <interactant intactId="EBI-716093">
        <id>P13994</id>
        <label>YJU2B</label>
    </interactant>
    <organismsDiffer>false</organismsDiffer>
    <experiments>9</experiments>
</comment>
<comment type="interaction">
    <interactant intactId="EBI-10172590">
        <id>Q7Z3I7</id>
    </interactant>
    <interactant intactId="EBI-2682961">
        <id>Q9Y2K1</id>
        <label>ZBTB1</label>
    </interactant>
    <organismsDiffer>false</organismsDiffer>
    <experiments>3</experiments>
</comment>
<comment type="interaction">
    <interactant intactId="EBI-10172590">
        <id>Q7Z3I7</id>
    </interactant>
    <interactant intactId="EBI-742740">
        <id>Q96BR9</id>
        <label>ZBTB8A</label>
    </interactant>
    <organismsDiffer>false</organismsDiffer>
    <experiments>3</experiments>
</comment>
<comment type="interaction">
    <interactant intactId="EBI-10172590">
        <id>Q7Z3I7</id>
    </interactant>
    <interactant intactId="EBI-741694">
        <id>P49910</id>
        <label>ZNF165</label>
    </interactant>
    <organismsDiffer>false</organismsDiffer>
    <experiments>3</experiments>
</comment>
<comment type="interaction">
    <interactant intactId="EBI-10172590">
        <id>Q7Z3I7</id>
    </interactant>
    <interactant intactId="EBI-10177272">
        <id>P15622-3</id>
        <label>ZNF250</label>
    </interactant>
    <organismsDiffer>false</organismsDiffer>
    <experiments>3</experiments>
</comment>
<comment type="interaction">
    <interactant intactId="EBI-10172590">
        <id>Q7Z3I7</id>
    </interactant>
    <interactant intactId="EBI-20110775">
        <id>Q8NA42</id>
        <label>ZNF383</label>
    </interactant>
    <organismsDiffer>false</organismsDiffer>
    <experiments>3</experiments>
</comment>
<comment type="interaction">
    <interactant intactId="EBI-10172590">
        <id>Q7Z3I7</id>
    </interactant>
    <interactant intactId="EBI-740727">
        <id>Q8TAU3</id>
        <label>ZNF417</label>
    </interactant>
    <organismsDiffer>false</organismsDiffer>
    <experiments>3</experiments>
</comment>
<comment type="interaction">
    <interactant intactId="EBI-10172590">
        <id>Q7Z3I7</id>
    </interactant>
    <interactant intactId="EBI-8490788">
        <id>Q68EA5</id>
        <label>ZNF57</label>
    </interactant>
    <organismsDiffer>false</organismsDiffer>
    <experiments>3</experiments>
</comment>
<comment type="interaction">
    <interactant intactId="EBI-10172590">
        <id>Q7Z3I7</id>
    </interactant>
    <interactant intactId="EBI-10172590">
        <id>Q7Z3I7</id>
        <label>ZNF572</label>
    </interactant>
    <organismsDiffer>false</organismsDiffer>
    <experiments>3</experiments>
</comment>
<comment type="interaction">
    <interactant intactId="EBI-10172590">
        <id>Q7Z3I7</id>
    </interactant>
    <interactant intactId="EBI-10251462">
        <id>Q6NX45</id>
        <label>ZNF774</label>
    </interactant>
    <organismsDiffer>false</organismsDiffer>
    <experiments>3</experiments>
</comment>
<comment type="interaction">
    <interactant intactId="EBI-10172590">
        <id>Q7Z3I7</id>
    </interactant>
    <interactant intactId="EBI-5667516">
        <id>Q9Y2P0</id>
        <label>ZNF835</label>
    </interactant>
    <organismsDiffer>false</organismsDiffer>
    <experiments>3</experiments>
</comment>
<comment type="subcellular location">
    <subcellularLocation>
        <location evidence="6">Nucleus</location>
    </subcellularLocation>
</comment>
<comment type="similarity">
    <text evidence="6">Belongs to the krueppel C2H2-type zinc-finger protein family.</text>
</comment>